<sequence>MKKTGYFLLAVIVIVAAAGVGYWKFSGNPDALREIVLEQCLPDQLQHQNPAPCAEVKPRAGYVVFKDRHGPLQYLLMPTYRINGTESPLLLEPATPNFFWLAWQARGYMSKKYGHDIPDSAVSLAINSRLGRSQDHLHIHISCIRPDVREQLDNDLTRISTRWLPLPGDLMGHEYLARRVTESELAQRSPFMMLAEEVPEARDHMGRYALAVVRQSDGSFVLLATERNLLTFNRASAEEIQDHSCAILSSR</sequence>
<feature type="chain" id="PRO_1000115946" description="CDP-diacylglycerol pyrophosphatase">
    <location>
        <begin position="1"/>
        <end position="251"/>
    </location>
</feature>
<feature type="transmembrane region" description="Helical" evidence="1">
    <location>
        <begin position="5"/>
        <end position="25"/>
    </location>
</feature>
<reference key="1">
    <citation type="journal article" date="2009" name="BMC Genomics">
        <title>Pseudogene accumulation in the evolutionary histories of Salmonella enterica serovars Paratyphi A and Typhi.</title>
        <authorList>
            <person name="Holt K.E."/>
            <person name="Thomson N.R."/>
            <person name="Wain J."/>
            <person name="Langridge G.C."/>
            <person name="Hasan R."/>
            <person name="Bhutta Z.A."/>
            <person name="Quail M.A."/>
            <person name="Norbertczak H."/>
            <person name="Walker D."/>
            <person name="Simmonds M."/>
            <person name="White B."/>
            <person name="Bason N."/>
            <person name="Mungall K."/>
            <person name="Dougan G."/>
            <person name="Parkhill J."/>
        </authorList>
    </citation>
    <scope>NUCLEOTIDE SEQUENCE [LARGE SCALE GENOMIC DNA]</scope>
    <source>
        <strain>AKU_12601</strain>
    </source>
</reference>
<dbReference type="EC" id="3.6.1.26" evidence="1"/>
<dbReference type="EMBL" id="FM200053">
    <property type="protein sequence ID" value="CAR61917.1"/>
    <property type="molecule type" value="Genomic_DNA"/>
</dbReference>
<dbReference type="RefSeq" id="WP_000750756.1">
    <property type="nucleotide sequence ID" value="NC_011147.1"/>
</dbReference>
<dbReference type="SMR" id="B5BJI4"/>
<dbReference type="KEGG" id="sek:SSPA3635"/>
<dbReference type="HOGENOM" id="CLU_077117_0_1_6"/>
<dbReference type="UniPathway" id="UPA00609">
    <property type="reaction ID" value="UER00664"/>
</dbReference>
<dbReference type="Proteomes" id="UP000001869">
    <property type="component" value="Chromosome"/>
</dbReference>
<dbReference type="GO" id="GO:0005886">
    <property type="term" value="C:plasma membrane"/>
    <property type="evidence" value="ECO:0007669"/>
    <property type="project" value="UniProtKB-SubCell"/>
</dbReference>
<dbReference type="GO" id="GO:0008715">
    <property type="term" value="F:CDP-diacylglycerol diphosphatase activity"/>
    <property type="evidence" value="ECO:0007669"/>
    <property type="project" value="UniProtKB-UniRule"/>
</dbReference>
<dbReference type="GO" id="GO:0046342">
    <property type="term" value="P:CDP-diacylglycerol catabolic process"/>
    <property type="evidence" value="ECO:0007669"/>
    <property type="project" value="UniProtKB-UniRule"/>
</dbReference>
<dbReference type="GO" id="GO:0008654">
    <property type="term" value="P:phospholipid biosynthetic process"/>
    <property type="evidence" value="ECO:0007669"/>
    <property type="project" value="UniProtKB-KW"/>
</dbReference>
<dbReference type="Gene3D" id="3.30.428.30">
    <property type="entry name" value="HIT family - CDH-like"/>
    <property type="match status" value="1"/>
</dbReference>
<dbReference type="HAMAP" id="MF_00319">
    <property type="entry name" value="Cdh"/>
    <property type="match status" value="1"/>
</dbReference>
<dbReference type="InterPro" id="IPR003763">
    <property type="entry name" value="CDP-diacylglyc_Pase"/>
</dbReference>
<dbReference type="InterPro" id="IPR015993">
    <property type="entry name" value="CDP-diacylglyc_Pase_proteobac"/>
</dbReference>
<dbReference type="InterPro" id="IPR036265">
    <property type="entry name" value="HIT-like_sf"/>
</dbReference>
<dbReference type="NCBIfam" id="TIGR00672">
    <property type="entry name" value="cdh"/>
    <property type="match status" value="1"/>
</dbReference>
<dbReference type="NCBIfam" id="NF003986">
    <property type="entry name" value="PRK05471.1-5"/>
    <property type="match status" value="1"/>
</dbReference>
<dbReference type="NCBIfam" id="NF003987">
    <property type="entry name" value="PRK05471.1-6"/>
    <property type="match status" value="1"/>
</dbReference>
<dbReference type="Pfam" id="PF02611">
    <property type="entry name" value="CDH"/>
    <property type="match status" value="1"/>
</dbReference>
<dbReference type="PIRSF" id="PIRSF001273">
    <property type="entry name" value="CDH"/>
    <property type="match status" value="1"/>
</dbReference>
<dbReference type="SUPFAM" id="SSF54197">
    <property type="entry name" value="HIT-like"/>
    <property type="match status" value="1"/>
</dbReference>
<name>CDH_SALPK</name>
<accession>B5BJI4</accession>
<organism>
    <name type="scientific">Salmonella paratyphi A (strain AKU_12601)</name>
    <dbReference type="NCBI Taxonomy" id="554290"/>
    <lineage>
        <taxon>Bacteria</taxon>
        <taxon>Pseudomonadati</taxon>
        <taxon>Pseudomonadota</taxon>
        <taxon>Gammaproteobacteria</taxon>
        <taxon>Enterobacterales</taxon>
        <taxon>Enterobacteriaceae</taxon>
        <taxon>Salmonella</taxon>
    </lineage>
</organism>
<comment type="catalytic activity">
    <reaction evidence="1">
        <text>a CDP-1,2-diacyl-sn-glycerol + H2O = a 1,2-diacyl-sn-glycero-3-phosphate + CMP + 2 H(+)</text>
        <dbReference type="Rhea" id="RHEA:15221"/>
        <dbReference type="ChEBI" id="CHEBI:15377"/>
        <dbReference type="ChEBI" id="CHEBI:15378"/>
        <dbReference type="ChEBI" id="CHEBI:58332"/>
        <dbReference type="ChEBI" id="CHEBI:58608"/>
        <dbReference type="ChEBI" id="CHEBI:60377"/>
        <dbReference type="EC" id="3.6.1.26"/>
    </reaction>
</comment>
<comment type="pathway">
    <text evidence="1">Phospholipid metabolism; CDP-diacylglycerol degradation; phosphatidate from CDP-diacylglycerol: step 1/1.</text>
</comment>
<comment type="subcellular location">
    <subcellularLocation>
        <location evidence="1">Cell inner membrane</location>
        <topology evidence="1">Single-pass membrane protein</topology>
    </subcellularLocation>
</comment>
<comment type="similarity">
    <text evidence="1">Belongs to the Cdh family.</text>
</comment>
<protein>
    <recommendedName>
        <fullName evidence="1">CDP-diacylglycerol pyrophosphatase</fullName>
        <ecNumber evidence="1">3.6.1.26</ecNumber>
    </recommendedName>
    <alternativeName>
        <fullName evidence="1">CDP-diacylglycerol phosphatidylhydrolase</fullName>
    </alternativeName>
    <alternativeName>
        <fullName evidence="1">CDP-diglyceride hydrolase</fullName>
    </alternativeName>
</protein>
<keyword id="KW-0997">Cell inner membrane</keyword>
<keyword id="KW-1003">Cell membrane</keyword>
<keyword id="KW-0378">Hydrolase</keyword>
<keyword id="KW-0444">Lipid biosynthesis</keyword>
<keyword id="KW-0443">Lipid metabolism</keyword>
<keyword id="KW-0472">Membrane</keyword>
<keyword id="KW-0594">Phospholipid biosynthesis</keyword>
<keyword id="KW-1208">Phospholipid metabolism</keyword>
<keyword id="KW-0812">Transmembrane</keyword>
<keyword id="KW-1133">Transmembrane helix</keyword>
<evidence type="ECO:0000255" key="1">
    <source>
        <dbReference type="HAMAP-Rule" id="MF_00319"/>
    </source>
</evidence>
<proteinExistence type="inferred from homology"/>
<gene>
    <name evidence="1" type="primary">cdh</name>
    <name type="ordered locus">SSPA3635</name>
</gene>